<feature type="chain" id="PRO_0000094149" description="Serine proteinase inhibitor 2">
    <location>
        <begin position="1"/>
        <end position="345"/>
    </location>
</feature>
<feature type="site" description="Reactive bond" evidence="1">
    <location>
        <begin position="306"/>
        <end position="307"/>
    </location>
</feature>
<proteinExistence type="inferred from homology"/>
<name>SPI2_RABPU</name>
<protein>
    <recommendedName>
        <fullName>Serine proteinase inhibitor 2</fullName>
        <shortName>Serp-2</shortName>
        <shortName>Serpin-2</shortName>
    </recommendedName>
</protein>
<accession>P42926</accession>
<accession>Q6RZB6</accession>
<gene>
    <name type="primary">OPG199</name>
    <name type="synonym">SPI-2</name>
    <name type="ordered locus">RPXV175</name>
</gene>
<sequence length="345" mass="38548">MDIFREIASSMKGENVFISPASISSVLTILYYGANGSTAEQLSKYVEKEENMDKVSAQNISFKSINKVYGRYSAVFKDSFLRKIGDKFQTVDFTDCRTIDAINKCVDIFTEGKINPLLDEQLSPDTCLLAISAVYFKAKWLTPFEKEFTSDYPFYVSPTEMVDVSMMSMYGKAFNHASVKESFGNFSIIELPYVGDTSMMVILPDKIDGLESIEQNLTDTNFKKWCNSLEATFIDVHIPKFKVTGSYNLVDTLVKSGLTEVFGSTGDYSNMCNLDVSVDAMIHKTYIDVNEEYTEAAAATSVLVADCASTVTNEFCADHPFIYVIRHVDGKILFVGRYCSPTTNC</sequence>
<organism>
    <name type="scientific">Rabbitpox virus (strain Utrecht)</name>
    <name type="common">RPV</name>
    <dbReference type="NCBI Taxonomy" id="45417"/>
    <lineage>
        <taxon>Viruses</taxon>
        <taxon>Varidnaviria</taxon>
        <taxon>Bamfordvirae</taxon>
        <taxon>Nucleocytoviricota</taxon>
        <taxon>Pokkesviricetes</taxon>
        <taxon>Chitovirales</taxon>
        <taxon>Poxviridae</taxon>
        <taxon>Chordopoxvirinae</taxon>
        <taxon>Orthopoxvirus</taxon>
        <taxon>Vaccinia virus</taxon>
    </lineage>
</organism>
<evidence type="ECO:0000250" key="1"/>
<evidence type="ECO:0000250" key="2">
    <source>
        <dbReference type="UniProtKB" id="P07385"/>
    </source>
</evidence>
<evidence type="ECO:0000250" key="3">
    <source>
        <dbReference type="UniProtKB" id="P15059"/>
    </source>
</evidence>
<evidence type="ECO:0000305" key="4"/>
<dbReference type="EMBL" id="U07763">
    <property type="protein sequence ID" value="AAA19158.1"/>
    <property type="molecule type" value="Genomic_DNA"/>
</dbReference>
<dbReference type="EMBL" id="AY484669">
    <property type="protein sequence ID" value="AAS49888.1"/>
    <property type="molecule type" value="Genomic_DNA"/>
</dbReference>
<dbReference type="SMR" id="P42926"/>
<dbReference type="MEROPS" id="I04.028"/>
<dbReference type="Proteomes" id="UP000166173">
    <property type="component" value="Segment"/>
</dbReference>
<dbReference type="GO" id="GO:0005615">
    <property type="term" value="C:extracellular space"/>
    <property type="evidence" value="ECO:0007669"/>
    <property type="project" value="InterPro"/>
</dbReference>
<dbReference type="GO" id="GO:0030430">
    <property type="term" value="C:host cell cytoplasm"/>
    <property type="evidence" value="ECO:0007669"/>
    <property type="project" value="UniProtKB-SubCell"/>
</dbReference>
<dbReference type="GO" id="GO:0004867">
    <property type="term" value="F:serine-type endopeptidase inhibitor activity"/>
    <property type="evidence" value="ECO:0007669"/>
    <property type="project" value="UniProtKB-KW"/>
</dbReference>
<dbReference type="GO" id="GO:0033668">
    <property type="term" value="P:symbiont-mediated suppression of host apoptosis"/>
    <property type="evidence" value="ECO:0007669"/>
    <property type="project" value="UniProtKB-KW"/>
</dbReference>
<dbReference type="CDD" id="cd19583">
    <property type="entry name" value="serpinN_SPI-1_SPI-2"/>
    <property type="match status" value="1"/>
</dbReference>
<dbReference type="FunFam" id="1.10.287.580:FF:000001">
    <property type="entry name" value="Serine proteinase inhibitor 2"/>
    <property type="match status" value="1"/>
</dbReference>
<dbReference type="Gene3D" id="2.30.39.10">
    <property type="entry name" value="Alpha-1-antitrypsin, domain 1"/>
    <property type="match status" value="1"/>
</dbReference>
<dbReference type="Gene3D" id="3.30.497.10">
    <property type="entry name" value="Antithrombin, subunit I, domain 2"/>
    <property type="match status" value="1"/>
</dbReference>
<dbReference type="Gene3D" id="1.10.287.580">
    <property type="entry name" value="Helix hairpin bin"/>
    <property type="match status" value="1"/>
</dbReference>
<dbReference type="InterPro" id="IPR023795">
    <property type="entry name" value="Serpin_CS"/>
</dbReference>
<dbReference type="InterPro" id="IPR023796">
    <property type="entry name" value="Serpin_dom"/>
</dbReference>
<dbReference type="InterPro" id="IPR000215">
    <property type="entry name" value="Serpin_fam"/>
</dbReference>
<dbReference type="InterPro" id="IPR036186">
    <property type="entry name" value="Serpin_sf"/>
</dbReference>
<dbReference type="InterPro" id="IPR042178">
    <property type="entry name" value="Serpin_sf_1"/>
</dbReference>
<dbReference type="InterPro" id="IPR042185">
    <property type="entry name" value="Serpin_sf_2"/>
</dbReference>
<dbReference type="PANTHER" id="PTHR11461:SF211">
    <property type="entry name" value="GH10112P-RELATED"/>
    <property type="match status" value="1"/>
</dbReference>
<dbReference type="PANTHER" id="PTHR11461">
    <property type="entry name" value="SERINE PROTEASE INHIBITOR, SERPIN"/>
    <property type="match status" value="1"/>
</dbReference>
<dbReference type="Pfam" id="PF00079">
    <property type="entry name" value="Serpin"/>
    <property type="match status" value="1"/>
</dbReference>
<dbReference type="SMART" id="SM00093">
    <property type="entry name" value="SERPIN"/>
    <property type="match status" value="1"/>
</dbReference>
<dbReference type="SUPFAM" id="SSF56574">
    <property type="entry name" value="Serpins"/>
    <property type="match status" value="1"/>
</dbReference>
<dbReference type="PROSITE" id="PS00284">
    <property type="entry name" value="SERPIN"/>
    <property type="match status" value="1"/>
</dbReference>
<comment type="function">
    <text evidence="2 3">Viral serpin that inhibits both cysteine and serine proteinases involved in the regulation of host inflammatory and apoptosis processes. Major anti-apoptotic protein which inhibits both intrinsic and extrinsic pathways and strongly cleaves host CASP1 and CASP8 but is a rather poor inhibitor of host CASP3. Prevents the proteolytic activity of host interleukin-1-beta converting enzyme (ICE) and ICE-like enzymes. Can also block apoptosis through host tumor necrosis factor (TNF) receptor (By similarity). The inhibition of host ICE is an example of a 'cross-class' interaction, in which a serpin inhibits a non-serine proteinase. Also inhibits granzyme B (By similarity).</text>
</comment>
<comment type="subcellular location">
    <subcellularLocation>
        <location evidence="3">Host cytoplasm</location>
    </subcellularLocation>
</comment>
<comment type="similarity">
    <text evidence="4">Belongs to the serpin family. Poxviruses subfamily.</text>
</comment>
<organismHost>
    <name type="scientific">Oryctolagus cuniculus</name>
    <name type="common">Rabbit</name>
    <dbReference type="NCBI Taxonomy" id="9986"/>
</organismHost>
<reference key="1">
    <citation type="journal article" date="1994" name="Virology">
        <title>The SPI-1 gene of rabbitpox virus determines host range and is required for hemorrhagic pock formation.</title>
        <authorList>
            <person name="Ali A.N."/>
            <person name="Turner P.C."/>
            <person name="Brooks M.A."/>
            <person name="Moyer R.W."/>
        </authorList>
    </citation>
    <scope>NUCLEOTIDE SEQUENCE [GENOMIC DNA]</scope>
</reference>
<reference key="2">
    <citation type="journal article" date="2005" name="J. Gen. Virol.">
        <title>Complete coding sequences of the rabbitpox virus genome.</title>
        <authorList>
            <person name="Li G."/>
            <person name="Chen N."/>
            <person name="Roper R.L."/>
            <person name="Feng Z."/>
            <person name="Hunter A.L."/>
            <person name="Danila M."/>
            <person name="Lefkowitz E.J."/>
            <person name="Buller R.M.L."/>
            <person name="Upton C."/>
        </authorList>
    </citation>
    <scope>NUCLEOTIDE SEQUENCE [LARGE SCALE GENOMIC DNA]</scope>
</reference>
<keyword id="KW-1035">Host cytoplasm</keyword>
<keyword id="KW-0945">Host-virus interaction</keyword>
<keyword id="KW-1085">Inhibition of host caspases by virus</keyword>
<keyword id="KW-1119">Modulation of host cell apoptosis by virus</keyword>
<keyword id="KW-0646">Protease inhibitor</keyword>
<keyword id="KW-0722">Serine protease inhibitor</keyword>